<dbReference type="EC" id="2.1.3.3" evidence="2"/>
<dbReference type="EMBL" id="AY396288">
    <property type="protein sequence ID" value="AAR30323.1"/>
    <property type="molecule type" value="Genomic_DNA"/>
</dbReference>
<dbReference type="SMR" id="Q6TK73"/>
<dbReference type="UniPathway" id="UPA00254">
    <property type="reaction ID" value="UER00365"/>
</dbReference>
<dbReference type="GO" id="GO:0005737">
    <property type="term" value="C:cytoplasm"/>
    <property type="evidence" value="ECO:0007669"/>
    <property type="project" value="UniProtKB-SubCell"/>
</dbReference>
<dbReference type="GO" id="GO:0016597">
    <property type="term" value="F:amino acid binding"/>
    <property type="evidence" value="ECO:0007669"/>
    <property type="project" value="InterPro"/>
</dbReference>
<dbReference type="GO" id="GO:0004585">
    <property type="term" value="F:ornithine carbamoyltransferase activity"/>
    <property type="evidence" value="ECO:0007669"/>
    <property type="project" value="UniProtKB-UniRule"/>
</dbReference>
<dbReference type="GO" id="GO:0042450">
    <property type="term" value="P:arginine biosynthetic process via ornithine"/>
    <property type="evidence" value="ECO:0007669"/>
    <property type="project" value="TreeGrafter"/>
</dbReference>
<dbReference type="GO" id="GO:0019547">
    <property type="term" value="P:arginine catabolic process to ornithine"/>
    <property type="evidence" value="ECO:0007669"/>
    <property type="project" value="UniProtKB-UniPathway"/>
</dbReference>
<dbReference type="GO" id="GO:0019240">
    <property type="term" value="P:citrulline biosynthetic process"/>
    <property type="evidence" value="ECO:0007669"/>
    <property type="project" value="TreeGrafter"/>
</dbReference>
<dbReference type="FunFam" id="3.40.50.1370:FF:000004">
    <property type="entry name" value="Ornithine carbamoyltransferase"/>
    <property type="match status" value="1"/>
</dbReference>
<dbReference type="Gene3D" id="3.40.50.1370">
    <property type="entry name" value="Aspartate/ornithine carbamoyltransferase"/>
    <property type="match status" value="2"/>
</dbReference>
<dbReference type="HAMAP" id="MF_01109">
    <property type="entry name" value="OTCase"/>
    <property type="match status" value="1"/>
</dbReference>
<dbReference type="InterPro" id="IPR006132">
    <property type="entry name" value="Asp/Orn_carbamoyltranf_P-bd"/>
</dbReference>
<dbReference type="InterPro" id="IPR006130">
    <property type="entry name" value="Asp/Orn_carbamoylTrfase"/>
</dbReference>
<dbReference type="InterPro" id="IPR036901">
    <property type="entry name" value="Asp/Orn_carbamoylTrfase_sf"/>
</dbReference>
<dbReference type="InterPro" id="IPR006131">
    <property type="entry name" value="Asp_carbamoyltransf_Asp/Orn-bd"/>
</dbReference>
<dbReference type="InterPro" id="IPR002292">
    <property type="entry name" value="Orn/put_carbamltrans"/>
</dbReference>
<dbReference type="InterPro" id="IPR024904">
    <property type="entry name" value="OTCase_ArgI"/>
</dbReference>
<dbReference type="NCBIfam" id="TIGR00658">
    <property type="entry name" value="orni_carb_tr"/>
    <property type="match status" value="1"/>
</dbReference>
<dbReference type="NCBIfam" id="NF001986">
    <property type="entry name" value="PRK00779.1"/>
    <property type="match status" value="1"/>
</dbReference>
<dbReference type="PANTHER" id="PTHR45753:SF1">
    <property type="entry name" value="ORNITHINE CARBAMOYLTRANSFERASE, CATABOLIC"/>
    <property type="match status" value="1"/>
</dbReference>
<dbReference type="PANTHER" id="PTHR45753">
    <property type="entry name" value="ORNITHINE CARBAMOYLTRANSFERASE, MITOCHONDRIAL"/>
    <property type="match status" value="1"/>
</dbReference>
<dbReference type="Pfam" id="PF00185">
    <property type="entry name" value="OTCace"/>
    <property type="match status" value="1"/>
</dbReference>
<dbReference type="Pfam" id="PF02729">
    <property type="entry name" value="OTCace_N"/>
    <property type="match status" value="1"/>
</dbReference>
<dbReference type="PRINTS" id="PR00100">
    <property type="entry name" value="AOTCASE"/>
</dbReference>
<dbReference type="PRINTS" id="PR00102">
    <property type="entry name" value="OTCASE"/>
</dbReference>
<dbReference type="SUPFAM" id="SSF53671">
    <property type="entry name" value="Aspartate/ornithine carbamoyltransferase"/>
    <property type="match status" value="1"/>
</dbReference>
<dbReference type="PROSITE" id="PS00097">
    <property type="entry name" value="CARBAMOYLTRANSFERASE"/>
    <property type="match status" value="1"/>
</dbReference>
<reference key="1">
    <citation type="journal article" date="2004" name="Appl. Environ. Microbiol.">
        <title>Characterization of the arginine deiminase operon of Streptococcus rattus FA-1.</title>
        <authorList>
            <person name="Griswold A."/>
            <person name="Chen Y.-Y.M."/>
            <person name="Snyder J.A."/>
            <person name="Burne R.A. Jr."/>
        </authorList>
    </citation>
    <scope>NUCLEOTIDE SEQUENCE [GENOMIC DNA]</scope>
    <source>
        <strain>FA-1</strain>
    </source>
</reference>
<protein>
    <recommendedName>
        <fullName evidence="2">Ornithine carbamoyltransferase, catabolic</fullName>
        <shortName evidence="2">OTCase</shortName>
        <ecNumber evidence="2">2.1.3.3</ecNumber>
    </recommendedName>
</protein>
<sequence length="337" mass="37938">MTQVFQGRSFLAEKDFTRAELEYLIDFSAHLKDLKKRGVPHHYLEGKNIALLFEKTSTRTRSAFTTAAIDLGAHPEYLGANDIQLGKKESTEDTAKVLGRMFDGIEFRGFSQRKVEELAEFSGVPVWNGLTDEWHPTQMLADFLTVKENFGKLEGLTLVYCGDGRNNMANSLLVTGAILGVNVRIFSPKELFPADDIVKLAESYAKESGAKLLITEDADEAVRGADVLYTDVWVSMGEESKFEERVKLLKPYQVNMELIKKAGNENLIFLHCLPAFHDTNTVYGKDIEEKFGVKEMEVTDEVFRSSYARQFDQAENRMHTIKAVMAATLGNLFIPKV</sequence>
<proteinExistence type="inferred from homology"/>
<gene>
    <name evidence="2" type="primary">arcB</name>
</gene>
<comment type="function">
    <text evidence="1">Reversibly catalyzes the transfer of the carbamoyl group from carbamoyl phosphate (CP) to the N(epsilon) atom of ornithine (ORN) to produce L-citrulline.</text>
</comment>
<comment type="catalytic activity">
    <reaction evidence="2">
        <text>carbamoyl phosphate + L-ornithine = L-citrulline + phosphate + H(+)</text>
        <dbReference type="Rhea" id="RHEA:19513"/>
        <dbReference type="ChEBI" id="CHEBI:15378"/>
        <dbReference type="ChEBI" id="CHEBI:43474"/>
        <dbReference type="ChEBI" id="CHEBI:46911"/>
        <dbReference type="ChEBI" id="CHEBI:57743"/>
        <dbReference type="ChEBI" id="CHEBI:58228"/>
        <dbReference type="EC" id="2.1.3.3"/>
    </reaction>
</comment>
<comment type="pathway">
    <text evidence="2">Amino-acid degradation; L-arginine degradation via ADI pathway; carbamoyl phosphate from L-arginine: step 2/2.</text>
</comment>
<comment type="subcellular location">
    <subcellularLocation>
        <location evidence="2">Cytoplasm</location>
    </subcellularLocation>
</comment>
<comment type="similarity">
    <text evidence="2">Belongs to the aspartate/ornithine carbamoyltransferase superfamily. OTCase family.</text>
</comment>
<name>OTCC_STRRT</name>
<feature type="chain" id="PRO_0000113042" description="Ornithine carbamoyltransferase, catabolic">
    <location>
        <begin position="1"/>
        <end position="337"/>
    </location>
</feature>
<feature type="binding site" evidence="2">
    <location>
        <begin position="57"/>
        <end position="60"/>
    </location>
    <ligand>
        <name>carbamoyl phosphate</name>
        <dbReference type="ChEBI" id="CHEBI:58228"/>
    </ligand>
</feature>
<feature type="binding site" evidence="2">
    <location>
        <position position="84"/>
    </location>
    <ligand>
        <name>carbamoyl phosphate</name>
        <dbReference type="ChEBI" id="CHEBI:58228"/>
    </ligand>
</feature>
<feature type="binding site" evidence="2">
    <location>
        <position position="108"/>
    </location>
    <ligand>
        <name>carbamoyl phosphate</name>
        <dbReference type="ChEBI" id="CHEBI:58228"/>
    </ligand>
</feature>
<feature type="binding site" evidence="2">
    <location>
        <begin position="135"/>
        <end position="138"/>
    </location>
    <ligand>
        <name>carbamoyl phosphate</name>
        <dbReference type="ChEBI" id="CHEBI:58228"/>
    </ligand>
</feature>
<feature type="binding site" evidence="2">
    <location>
        <position position="167"/>
    </location>
    <ligand>
        <name>L-ornithine</name>
        <dbReference type="ChEBI" id="CHEBI:46911"/>
    </ligand>
</feature>
<feature type="binding site" evidence="2">
    <location>
        <position position="231"/>
    </location>
    <ligand>
        <name>L-ornithine</name>
        <dbReference type="ChEBI" id="CHEBI:46911"/>
    </ligand>
</feature>
<feature type="binding site" evidence="2">
    <location>
        <begin position="235"/>
        <end position="236"/>
    </location>
    <ligand>
        <name>L-ornithine</name>
        <dbReference type="ChEBI" id="CHEBI:46911"/>
    </ligand>
</feature>
<feature type="binding site" evidence="2">
    <location>
        <begin position="272"/>
        <end position="273"/>
    </location>
    <ligand>
        <name>carbamoyl phosphate</name>
        <dbReference type="ChEBI" id="CHEBI:58228"/>
    </ligand>
</feature>
<feature type="binding site" evidence="2">
    <location>
        <position position="317"/>
    </location>
    <ligand>
        <name>carbamoyl phosphate</name>
        <dbReference type="ChEBI" id="CHEBI:58228"/>
    </ligand>
</feature>
<keyword id="KW-0056">Arginine metabolism</keyword>
<keyword id="KW-0963">Cytoplasm</keyword>
<keyword id="KW-0808">Transferase</keyword>
<organism>
    <name type="scientific">Streptococcus ratti</name>
    <dbReference type="NCBI Taxonomy" id="1341"/>
    <lineage>
        <taxon>Bacteria</taxon>
        <taxon>Bacillati</taxon>
        <taxon>Bacillota</taxon>
        <taxon>Bacilli</taxon>
        <taxon>Lactobacillales</taxon>
        <taxon>Streptococcaceae</taxon>
        <taxon>Streptococcus</taxon>
    </lineage>
</organism>
<evidence type="ECO:0000250" key="1"/>
<evidence type="ECO:0000255" key="2">
    <source>
        <dbReference type="HAMAP-Rule" id="MF_01109"/>
    </source>
</evidence>
<accession>Q6TK73</accession>